<keyword id="KW-0963">Cytoplasm</keyword>
<keyword id="KW-0210">Decarboxylase</keyword>
<keyword id="KW-0456">Lyase</keyword>
<keyword id="KW-0627">Porphyrin biosynthesis</keyword>
<evidence type="ECO:0000255" key="1">
    <source>
        <dbReference type="HAMAP-Rule" id="MF_00218"/>
    </source>
</evidence>
<dbReference type="EC" id="4.1.1.37" evidence="1"/>
<dbReference type="EMBL" id="CP000661">
    <property type="protein sequence ID" value="ABP69456.1"/>
    <property type="molecule type" value="Genomic_DNA"/>
</dbReference>
<dbReference type="SMR" id="A4WPZ2"/>
<dbReference type="STRING" id="349102.Rsph17025_0550"/>
<dbReference type="KEGG" id="rsq:Rsph17025_0550"/>
<dbReference type="eggNOG" id="COG0407">
    <property type="taxonomic scope" value="Bacteria"/>
</dbReference>
<dbReference type="HOGENOM" id="CLU_040933_0_0_5"/>
<dbReference type="BioCyc" id="RSPH349102:G1G8M-567-MONOMER"/>
<dbReference type="UniPathway" id="UPA00251">
    <property type="reaction ID" value="UER00321"/>
</dbReference>
<dbReference type="GO" id="GO:0005829">
    <property type="term" value="C:cytosol"/>
    <property type="evidence" value="ECO:0007669"/>
    <property type="project" value="TreeGrafter"/>
</dbReference>
<dbReference type="GO" id="GO:0004853">
    <property type="term" value="F:uroporphyrinogen decarboxylase activity"/>
    <property type="evidence" value="ECO:0007669"/>
    <property type="project" value="UniProtKB-UniRule"/>
</dbReference>
<dbReference type="GO" id="GO:0019353">
    <property type="term" value="P:protoporphyrinogen IX biosynthetic process from glutamate"/>
    <property type="evidence" value="ECO:0007669"/>
    <property type="project" value="TreeGrafter"/>
</dbReference>
<dbReference type="CDD" id="cd00717">
    <property type="entry name" value="URO-D"/>
    <property type="match status" value="1"/>
</dbReference>
<dbReference type="Gene3D" id="3.20.20.210">
    <property type="match status" value="1"/>
</dbReference>
<dbReference type="HAMAP" id="MF_00218">
    <property type="entry name" value="URO_D"/>
    <property type="match status" value="1"/>
</dbReference>
<dbReference type="InterPro" id="IPR038071">
    <property type="entry name" value="UROD/MetE-like_sf"/>
</dbReference>
<dbReference type="InterPro" id="IPR006361">
    <property type="entry name" value="Uroporphyrinogen_deCO2ase_HemE"/>
</dbReference>
<dbReference type="InterPro" id="IPR000257">
    <property type="entry name" value="Uroporphyrinogen_deCOase"/>
</dbReference>
<dbReference type="NCBIfam" id="TIGR01464">
    <property type="entry name" value="hemE"/>
    <property type="match status" value="1"/>
</dbReference>
<dbReference type="PANTHER" id="PTHR21091">
    <property type="entry name" value="METHYLTETRAHYDROFOLATE:HOMOCYSTEINE METHYLTRANSFERASE RELATED"/>
    <property type="match status" value="1"/>
</dbReference>
<dbReference type="PANTHER" id="PTHR21091:SF169">
    <property type="entry name" value="UROPORPHYRINOGEN DECARBOXYLASE"/>
    <property type="match status" value="1"/>
</dbReference>
<dbReference type="Pfam" id="PF01208">
    <property type="entry name" value="URO-D"/>
    <property type="match status" value="1"/>
</dbReference>
<dbReference type="SUPFAM" id="SSF51726">
    <property type="entry name" value="UROD/MetE-like"/>
    <property type="match status" value="1"/>
</dbReference>
<dbReference type="PROSITE" id="PS00906">
    <property type="entry name" value="UROD_1"/>
    <property type="match status" value="1"/>
</dbReference>
<dbReference type="PROSITE" id="PS00907">
    <property type="entry name" value="UROD_2"/>
    <property type="match status" value="1"/>
</dbReference>
<organism>
    <name type="scientific">Cereibacter sphaeroides (strain ATCC 17025 / ATH 2.4.3)</name>
    <name type="common">Rhodobacter sphaeroides</name>
    <dbReference type="NCBI Taxonomy" id="349102"/>
    <lineage>
        <taxon>Bacteria</taxon>
        <taxon>Pseudomonadati</taxon>
        <taxon>Pseudomonadota</taxon>
        <taxon>Alphaproteobacteria</taxon>
        <taxon>Rhodobacterales</taxon>
        <taxon>Paracoccaceae</taxon>
        <taxon>Cereibacter</taxon>
    </lineage>
</organism>
<comment type="function">
    <text evidence="1">Catalyzes the decarboxylation of four acetate groups of uroporphyrinogen-III to yield coproporphyrinogen-III.</text>
</comment>
<comment type="catalytic activity">
    <reaction evidence="1">
        <text>uroporphyrinogen III + 4 H(+) = coproporphyrinogen III + 4 CO2</text>
        <dbReference type="Rhea" id="RHEA:19865"/>
        <dbReference type="ChEBI" id="CHEBI:15378"/>
        <dbReference type="ChEBI" id="CHEBI:16526"/>
        <dbReference type="ChEBI" id="CHEBI:57308"/>
        <dbReference type="ChEBI" id="CHEBI:57309"/>
        <dbReference type="EC" id="4.1.1.37"/>
    </reaction>
</comment>
<comment type="pathway">
    <text evidence="1">Porphyrin-containing compound metabolism; protoporphyrin-IX biosynthesis; coproporphyrinogen-III from 5-aminolevulinate: step 4/4.</text>
</comment>
<comment type="subunit">
    <text evidence="1">Homodimer.</text>
</comment>
<comment type="subcellular location">
    <subcellularLocation>
        <location evidence="1">Cytoplasm</location>
    </subcellularLocation>
</comment>
<comment type="similarity">
    <text evidence="1">Belongs to the uroporphyrinogen decarboxylase family.</text>
</comment>
<gene>
    <name evidence="1" type="primary">hemE</name>
    <name type="ordered locus">Rsph17025_0550</name>
</gene>
<sequence>MTKTMLRALRGETLPTPPIWLMRQAGRYLPEYRATRAEAGDFLSLCYNPELAAEVTLQPIRRYGFDAAILFADILLLPQALGADLWFETGEGPRMSTITDMAGVEALKGKDEIHEKLAPVYETCRILARELPKETTFIGFAGMPWTVATYMIAGRGSKDQAAAHKLKDTDRPAFEALMDRITEATIEYLSKQVEAGCEVVKLFDSWAGSLKGQDFEDFAVAPAKKIIAELKARHPGLPIIAFPREAGEGYIGFAEKTGADCVAIDNSVSPEWAAENVQKGKSCVQGNLDPKYMITGGDELVQATKRVVEAFRNGPHIFNLGHGITPEADPENVTLLIETIRGK</sequence>
<accession>A4WPZ2</accession>
<feature type="chain" id="PRO_1000023958" description="Uroporphyrinogen decarboxylase">
    <location>
        <begin position="1"/>
        <end position="343"/>
    </location>
</feature>
<feature type="binding site" evidence="1">
    <location>
        <begin position="23"/>
        <end position="27"/>
    </location>
    <ligand>
        <name>substrate</name>
    </ligand>
</feature>
<feature type="binding site" evidence="1">
    <location>
        <position position="73"/>
    </location>
    <ligand>
        <name>substrate</name>
    </ligand>
</feature>
<feature type="binding site" evidence="1">
    <location>
        <position position="150"/>
    </location>
    <ligand>
        <name>substrate</name>
    </ligand>
</feature>
<feature type="binding site" evidence="1">
    <location>
        <position position="205"/>
    </location>
    <ligand>
        <name>substrate</name>
    </ligand>
</feature>
<feature type="binding site" evidence="1">
    <location>
        <position position="322"/>
    </location>
    <ligand>
        <name>substrate</name>
    </ligand>
</feature>
<feature type="site" description="Transition state stabilizer" evidence="1">
    <location>
        <position position="73"/>
    </location>
</feature>
<name>DCUP_CERS5</name>
<reference key="1">
    <citation type="submission" date="2007-04" db="EMBL/GenBank/DDBJ databases">
        <title>Complete sequence of chromosome of Rhodobacter sphaeroides ATCC 17025.</title>
        <authorList>
            <consortium name="US DOE Joint Genome Institute"/>
            <person name="Copeland A."/>
            <person name="Lucas S."/>
            <person name="Lapidus A."/>
            <person name="Barry K."/>
            <person name="Detter J.C."/>
            <person name="Glavina del Rio T."/>
            <person name="Hammon N."/>
            <person name="Israni S."/>
            <person name="Dalin E."/>
            <person name="Tice H."/>
            <person name="Pitluck S."/>
            <person name="Chertkov O."/>
            <person name="Brettin T."/>
            <person name="Bruce D."/>
            <person name="Han C."/>
            <person name="Schmutz J."/>
            <person name="Larimer F."/>
            <person name="Land M."/>
            <person name="Hauser L."/>
            <person name="Kyrpides N."/>
            <person name="Kim E."/>
            <person name="Richardson P."/>
            <person name="Mackenzie C."/>
            <person name="Choudhary M."/>
            <person name="Donohue T.J."/>
            <person name="Kaplan S."/>
        </authorList>
    </citation>
    <scope>NUCLEOTIDE SEQUENCE [LARGE SCALE GENOMIC DNA]</scope>
    <source>
        <strain>ATCC 17025 / ATH 2.4.3</strain>
    </source>
</reference>
<protein>
    <recommendedName>
        <fullName evidence="1">Uroporphyrinogen decarboxylase</fullName>
        <shortName evidence="1">UPD</shortName>
        <shortName evidence="1">URO-D</shortName>
        <ecNumber evidence="1">4.1.1.37</ecNumber>
    </recommendedName>
</protein>
<proteinExistence type="inferred from homology"/>